<evidence type="ECO:0000250" key="1"/>
<evidence type="ECO:0000250" key="2">
    <source>
        <dbReference type="UniProtKB" id="P9WQE7"/>
    </source>
</evidence>
<evidence type="ECO:0000255" key="3">
    <source>
        <dbReference type="PROSITE-ProRule" id="PRU00258"/>
    </source>
</evidence>
<evidence type="ECO:0000255" key="4">
    <source>
        <dbReference type="PROSITE-ProRule" id="PRU01348"/>
    </source>
</evidence>
<evidence type="ECO:0000255" key="5">
    <source>
        <dbReference type="PROSITE-ProRule" id="PRU01363"/>
    </source>
</evidence>
<evidence type="ECO:0000255" key="6">
    <source>
        <dbReference type="PROSITE-ProRule" id="PRU10022"/>
    </source>
</evidence>
<evidence type="ECO:0000256" key="7">
    <source>
        <dbReference type="SAM" id="MobiDB-lite"/>
    </source>
</evidence>
<evidence type="ECO:0000269" key="8">
    <source>
    </source>
</evidence>
<evidence type="ECO:0000305" key="9"/>
<sequence length="1876" mass="198848">MTGSISGEADLRHWLIDYLVTNIGCTPDEVDPDLSLADLGVSSRDAVVLSGELSELLGRTVSPIDFWEHPTINALAAYLAAPEPSPDSDAAVKRGARNSLDEPIAVVGMGCRFPGGISCPEALWDFLCERRSSISQVPPQRWQPFEGGPPEVAAALARTTRWGSFLPDIDAFDAEFFEISPSEADKMDPQQRLLLEVAWEALEHAGIPPGTLRRSATGVFAGACLSEYGAMASADLSQVDGWSNSGGAMSIIANRLSYFLDLRGPSVAVDTACSSSLVAIHLACQSLRTQDCHLAIAAGVNLLLSPAVFRGFDQVGALSPTGQCRAFDATADGFVRGEGAGVVVLKRLTDAQRDGDRVLAVICGSAVTQDGRSNGLMAPNPAAQMAVLRAAYTNAGMQPSEVDYVEAHGTGTLLGDPIEARALGTVLGRGRPEDSPLLIGSVKTNLGHTEAAAGIAGFIKTVLAVQHGQIPPNQHFETANPHIPFTDLRMKVVDTQTEWPATGHPRRAGVSSFGFGGTNAHVVIEQGQEVRPAPGQGLSPAVSTLVVAGKTMQRVSATAGMLADWMEGPGADVALADVAHTLNHHRSRQPKFGTVVARDRTQAIAGLRALAAGQHAPGVVNPAEGSPGPGTVFVYSGRGSQWAGMGRQLLADEPAFAAAVAELEPVFVEQAGFSLHDVLANGEELVGIEQIQLGLIGMQLALTELWCSYGVQPDLVIGHSMGEVAAAVVAGALTPAEGLRVTATRSRLMAPLSGQGGMALLELDAPTTEALIADFPQVTLGIYNSPRQTVIAGPTEQIDELITRVRARDRFASRVNIEVAPHNPAMDALQPAMRSELADLTPRTPTIGIISTTYADLHTQPVFDAEHWATNMRNPVHFQQAIASAGSGADGAYHTFIEISAHPLLTQAIIDTLHSAQPGARYTSLGTLQRDTDDVVTFRTNLNKAHTIHPPHTPHPPEPHPPIPTTPWQHTRHWITTKYPAGSVGSAPRAGTLLGQHTTVATVSASPPSHLWQARLAPDAKPYQGGHRFHQVEVVPASVVLHTILSAATELGYSALSEVRFEQPIFADRPRLIQVVADNRAISLASSPAAGTPSDRWTRHVTAQLSSSPSDSASSLNEHHRANGQPPERAHRDLIPDLAELLAMRGIDGLPFSWTVASWTQHSSNLTVAIDLPEALPEGSTGPLLDAAVHLAALSDVADSRLYVPASIEQISLGDVVTGPRSSVTLNRTAHDDDGITVDVTVAAHGEVPSLSMRSLRYRALDFGLDVGRAQPPASTGPVEAYCDATNFVHTIDWQPQTVPDATHPGAEQVTHPGPVAIIGDDGAALCETLEGAGYQPAVMSDGVSQARYVVYVADSDPAGADETDVDFAVRICTEITGLVRTLAERDADKPAALWILTRGVHESVAPSALRQSFLWGLAGVIAAEHPELWGGLVDLAINDDLGEFGPALAELLAKPSKSILVRRDGVVLAPALAPVRGEPARKSLQCRPDAAYLITGGLGALGLLMADWLADRGAHRLVLTGRTPLPPRRDWQLDTLDTELRRRIDAIRALEMRGVTVEAVAADVGCREDVQALLAARDRDGAAPIRGIIHAAGITNDQLVTSMTGDAVRQVMWPKIGGSQVLHDAFPPGSVDFFYLTASAAGIFGIPGQGSYAAANSYLDALARARRQQGCHTMSLDWVAWRGLGLAADAQLVSEELARMGSRDITPSEAFTAWEFVDGYDVAQAVVVPMPAPAGADGSGANAYLLPARNWSVMAATEVRSELEQGLRRIIAAELRVPEKELDTDRPFAELGLNSLMAMAIRREAEQFVGIELSATMLFNHPTVKSLASYLAKRVAPHDVSQDNQISALSSSAGSVLDSLFDRIESAPPEAERSV</sequence>
<reference key="1">
    <citation type="journal article" date="2003" name="Proc. Natl. Acad. Sci. U.S.A.">
        <title>The complete genome sequence of Mycobacterium bovis.</title>
        <authorList>
            <person name="Garnier T."/>
            <person name="Eiglmeier K."/>
            <person name="Camus J.-C."/>
            <person name="Medina N."/>
            <person name="Mansoor H."/>
            <person name="Pryor M."/>
            <person name="Duthoy S."/>
            <person name="Grondin S."/>
            <person name="Lacroix C."/>
            <person name="Monsempe C."/>
            <person name="Simon S."/>
            <person name="Harris B."/>
            <person name="Atkin R."/>
            <person name="Doggett J."/>
            <person name="Mayes R."/>
            <person name="Keating L."/>
            <person name="Wheeler P.R."/>
            <person name="Parkhill J."/>
            <person name="Barrell B.G."/>
            <person name="Cole S.T."/>
            <person name="Gordon S.V."/>
            <person name="Hewinson R.G."/>
        </authorList>
    </citation>
    <scope>NUCLEOTIDE SEQUENCE [LARGE SCALE GENOMIC DNA]</scope>
    <source>
        <strain>ATCC BAA-935 / AF2122/97</strain>
    </source>
</reference>
<reference key="2">
    <citation type="journal article" date="2017" name="Genome Announc.">
        <title>Updated reference genome sequence and annotation of Mycobacterium bovis AF2122/97.</title>
        <authorList>
            <person name="Malone K.M."/>
            <person name="Farrell D."/>
            <person name="Stuber T.P."/>
            <person name="Schubert O.T."/>
            <person name="Aebersold R."/>
            <person name="Robbe-Austerman S."/>
            <person name="Gordon S.V."/>
        </authorList>
    </citation>
    <scope>NUCLEOTIDE SEQUENCE [LARGE SCALE GENOMIC DNA]</scope>
    <scope>GENOME REANNOTATION</scope>
    <source>
        <strain>ATCC BAA-935 / AF2122/97</strain>
    </source>
</reference>
<reference key="3">
    <citation type="journal article" date="1997" name="J. Biol. Chem.">
        <title>Gene knockout reveals a novel gene cluster for the synthesis of a class of cell wall lipids unique to pathogenic mycobacteria.</title>
        <authorList>
            <person name="Azad A.K."/>
            <person name="Sirakova T.D."/>
            <person name="Fernandes N.D."/>
            <person name="Kolattukudy P.E."/>
        </authorList>
    </citation>
    <scope>FUNCTION IN THE PHTHIOCEROL AND PHENOLPHTHIOCEROL BIOSYNTHESIS</scope>
    <scope>PATHWAY</scope>
    <scope>DISRUPTION PHENOTYPE</scope>
    <source>
        <strain>BCG</strain>
    </source>
</reference>
<comment type="function">
    <text evidence="2 8">Part of the PpsABCDE complex involved in the biosynthesis of the lipid core common to phthiocerols and phenolphthiocerols by successive additions of malonyl-CoA or methylmalonyl-CoA extender units (PubMed:9201977). PpsA can accept as substrate the activated forms of either icosanoyl (C20), docosanoyl (C22) or lignoceroyl (C24) groups from FadD26, or a (4-hydroxyphenyl)-C17 or (4-hydroxyphenyl)-C19 fatty acyl from FadD29 (By similarity). PpsA initiates the biosynthesis and extends its substrate using a malonyl-CoA extender unit. The PpsB and PpsC proteins add the second and third malonyl-CoA extender units. PpsD adds an (R)-methylmalonyl unit and PpsE adds a second (R)-methylmalonyl unit. The incorporation of the methylmalonyl units results in formation of two branched methyl groups in the elongated product (By similarity).</text>
</comment>
<comment type="catalytic activity">
    <reaction evidence="2">
        <text>icosanoyl-[(phenol)carboxyphthiodiolenone synthase] + 2 (S)-methylmalonyl-CoA + 3 malonyl-CoA + 5 NADPH + 10 H(+) = C32-carboxyphthiodiolenone-[(phenol)carboxyphthiodiolenone synthase] + 5 CO2 + 5 NADP(+) + 5 CoA + 2 H2O</text>
        <dbReference type="Rhea" id="RHEA:57748"/>
        <dbReference type="Rhea" id="RHEA-COMP:14985"/>
        <dbReference type="Rhea" id="RHEA-COMP:14986"/>
        <dbReference type="ChEBI" id="CHEBI:15377"/>
        <dbReference type="ChEBI" id="CHEBI:15378"/>
        <dbReference type="ChEBI" id="CHEBI:16526"/>
        <dbReference type="ChEBI" id="CHEBI:57287"/>
        <dbReference type="ChEBI" id="CHEBI:57327"/>
        <dbReference type="ChEBI" id="CHEBI:57384"/>
        <dbReference type="ChEBI" id="CHEBI:57783"/>
        <dbReference type="ChEBI" id="CHEBI:58349"/>
        <dbReference type="ChEBI" id="CHEBI:87848"/>
        <dbReference type="ChEBI" id="CHEBI:142236"/>
        <dbReference type="EC" id="2.3.1.292"/>
    </reaction>
</comment>
<comment type="catalytic activity">
    <reaction evidence="2">
        <text>docosanoyl-[(phenol)carboxyphthiodiolenone synthase] + 2 (S)-methylmalonyl-CoA + 3 malonyl-CoA + 5 NADPH + 10 H(+) = C34-carboxyphthiodiolenone-[(phenol)carboxyphthiodiolenone synthase] + 5 CO2 + 5 NADP(+) + 5 CoA + 2 H2O</text>
        <dbReference type="Rhea" id="RHEA:57752"/>
        <dbReference type="Rhea" id="RHEA-COMP:14987"/>
        <dbReference type="Rhea" id="RHEA-COMP:14988"/>
        <dbReference type="ChEBI" id="CHEBI:15377"/>
        <dbReference type="ChEBI" id="CHEBI:15378"/>
        <dbReference type="ChEBI" id="CHEBI:16526"/>
        <dbReference type="ChEBI" id="CHEBI:57287"/>
        <dbReference type="ChEBI" id="CHEBI:57327"/>
        <dbReference type="ChEBI" id="CHEBI:57384"/>
        <dbReference type="ChEBI" id="CHEBI:57783"/>
        <dbReference type="ChEBI" id="CHEBI:58349"/>
        <dbReference type="ChEBI" id="CHEBI:142237"/>
        <dbReference type="ChEBI" id="CHEBI:142238"/>
        <dbReference type="EC" id="2.3.1.292"/>
    </reaction>
</comment>
<comment type="catalytic activity">
    <reaction evidence="2">
        <text>17-(4-hydroxyphenyl)heptadecanoyl-[(phenol)carboxyphthiodiolenone synthase] + 2 (S)-methylmalonyl-CoA + 3 malonyl-CoA + 5 NADPH + 10 H(+) = C35-(phenol)carboxyphthiodiolenone-[(phenol)carboxyphthiodiolenone synthase] + 5 CO2 + 5 NADP(+) + 5 CoA + 2 H2O</text>
        <dbReference type="Rhea" id="RHEA:57756"/>
        <dbReference type="Rhea" id="RHEA-COMP:14272"/>
        <dbReference type="Rhea" id="RHEA-COMP:14989"/>
        <dbReference type="ChEBI" id="CHEBI:15377"/>
        <dbReference type="ChEBI" id="CHEBI:15378"/>
        <dbReference type="ChEBI" id="CHEBI:16526"/>
        <dbReference type="ChEBI" id="CHEBI:57287"/>
        <dbReference type="ChEBI" id="CHEBI:57327"/>
        <dbReference type="ChEBI" id="CHEBI:57384"/>
        <dbReference type="ChEBI" id="CHEBI:57783"/>
        <dbReference type="ChEBI" id="CHEBI:58349"/>
        <dbReference type="ChEBI" id="CHEBI:133300"/>
        <dbReference type="ChEBI" id="CHEBI:142259"/>
        <dbReference type="EC" id="2.3.1.292"/>
    </reaction>
</comment>
<comment type="catalytic activity">
    <reaction evidence="2">
        <text>19-(4-hydroxyphenyl)nonadecanoyl-[(phenol)carboxyphthiodiolenone synthase] + 2 (S)-methylmalonyl-CoA + 3 malonyl-CoA + 5 NADPH + 10 H(+) = C37-(phenol)carboxyphthiodiolenone-[(phenol)carboxyphthiodiolenone synthase] + 5 CO2 + 5 NADP(+) + 5 CoA + 2 H2O</text>
        <dbReference type="Rhea" id="RHEA:57760"/>
        <dbReference type="Rhea" id="RHEA-COMP:14273"/>
        <dbReference type="Rhea" id="RHEA-COMP:14990"/>
        <dbReference type="ChEBI" id="CHEBI:15377"/>
        <dbReference type="ChEBI" id="CHEBI:15378"/>
        <dbReference type="ChEBI" id="CHEBI:16526"/>
        <dbReference type="ChEBI" id="CHEBI:57287"/>
        <dbReference type="ChEBI" id="CHEBI:57327"/>
        <dbReference type="ChEBI" id="CHEBI:57384"/>
        <dbReference type="ChEBI" id="CHEBI:57783"/>
        <dbReference type="ChEBI" id="CHEBI:58349"/>
        <dbReference type="ChEBI" id="CHEBI:133301"/>
        <dbReference type="ChEBI" id="CHEBI:142260"/>
        <dbReference type="EC" id="2.3.1.292"/>
    </reaction>
</comment>
<comment type="cofactor">
    <cofactor evidence="2">
        <name>NADP(+)</name>
        <dbReference type="ChEBI" id="CHEBI:58349"/>
    </cofactor>
</comment>
<comment type="cofactor">
    <cofactor evidence="1">
        <name>pantetheine 4'-phosphate</name>
        <dbReference type="ChEBI" id="CHEBI:47942"/>
    </cofactor>
    <text evidence="1">Binds 2 phosphopantetheines covalently.</text>
</comment>
<comment type="pathway">
    <text evidence="8">Lipid metabolism; fatty acid biosynthesis.</text>
</comment>
<comment type="disruption phenotype">
    <text evidence="8">Disruption of the pps gene cluster abolishes the production of both phthiocerol and phenolphthiocerol derivatives.</text>
</comment>
<feature type="chain" id="PRO_0000406945" description="Phenolphthiocerol/phthiocerol polyketide synthase subunit A">
    <location>
        <begin position="1"/>
        <end position="1876"/>
    </location>
</feature>
<feature type="domain" description="Carrier 1" evidence="3">
    <location>
        <begin position="9"/>
        <end position="83"/>
    </location>
</feature>
<feature type="domain" description="Ketosynthase family 3 (KS3)" evidence="4">
    <location>
        <begin position="101"/>
        <end position="526"/>
    </location>
</feature>
<feature type="domain" description="PKS/mFAS DH" evidence="5">
    <location>
        <begin position="997"/>
        <end position="1267"/>
    </location>
</feature>
<feature type="domain" description="Carrier 2" evidence="3">
    <location>
        <begin position="1759"/>
        <end position="1836"/>
    </location>
</feature>
<feature type="region of interest" description="Acyltransferase" evidence="1">
    <location>
        <begin position="624"/>
        <end position="950"/>
    </location>
</feature>
<feature type="region of interest" description="N-terminal hotdog fold" evidence="5">
    <location>
        <begin position="997"/>
        <end position="1112"/>
    </location>
</feature>
<feature type="region of interest" description="Disordered" evidence="7">
    <location>
        <begin position="1104"/>
        <end position="1130"/>
    </location>
</feature>
<feature type="region of interest" description="C-terminal hotdog fold" evidence="5">
    <location>
        <begin position="1130"/>
        <end position="1267"/>
    </location>
</feature>
<feature type="region of interest" description="Beta-ketoacyl reductase" evidence="1">
    <location>
        <begin position="1491"/>
        <end position="1728"/>
    </location>
</feature>
<feature type="compositionally biased region" description="Low complexity" evidence="7">
    <location>
        <begin position="1106"/>
        <end position="1115"/>
    </location>
</feature>
<feature type="active site" description="For beta-ketoacyl synthase activity" evidence="4">
    <location>
        <position position="273"/>
    </location>
</feature>
<feature type="active site" description="For beta-ketoacyl synthase activity" evidence="4">
    <location>
        <position position="408"/>
    </location>
</feature>
<feature type="active site" description="For beta-ketoacyl synthase activity" evidence="4">
    <location>
        <position position="448"/>
    </location>
</feature>
<feature type="active site" description="For malonyltransferase activity" evidence="6">
    <location>
        <position position="720"/>
    </location>
</feature>
<feature type="active site" description="Proton acceptor; for dehydratase activity" evidence="5">
    <location>
        <position position="1027"/>
    </location>
</feature>
<feature type="active site" description="Proton donor; for dehydratase activity" evidence="5">
    <location>
        <position position="1186"/>
    </location>
</feature>
<feature type="binding site" evidence="1">
    <location>
        <begin position="1492"/>
        <end position="1551"/>
    </location>
    <ligand>
        <name>NADP(+)</name>
        <dbReference type="ChEBI" id="CHEBI:58349"/>
    </ligand>
</feature>
<feature type="modified residue" description="O-(pantetheine 4'-phosphoryl)serine" evidence="3">
    <location>
        <position position="43"/>
    </location>
</feature>
<feature type="modified residue" description="O-(pantetheine 4'-phosphoryl)serine" evidence="3">
    <location>
        <position position="1796"/>
    </location>
</feature>
<accession>Q7TXM0</accession>
<accession>A0A1R3Y2S1</accession>
<accession>X2BM73</accession>
<organism>
    <name type="scientific">Mycobacterium bovis (strain ATCC BAA-935 / AF2122/97)</name>
    <dbReference type="NCBI Taxonomy" id="233413"/>
    <lineage>
        <taxon>Bacteria</taxon>
        <taxon>Bacillati</taxon>
        <taxon>Actinomycetota</taxon>
        <taxon>Actinomycetes</taxon>
        <taxon>Mycobacteriales</taxon>
        <taxon>Mycobacteriaceae</taxon>
        <taxon>Mycobacterium</taxon>
        <taxon>Mycobacterium tuberculosis complex</taxon>
    </lineage>
</organism>
<proteinExistence type="evidence at protein level"/>
<name>PPSA_MYCBO</name>
<protein>
    <recommendedName>
        <fullName evidence="9">Phenolphthiocerol/phthiocerol polyketide synthase subunit A</fullName>
        <ecNumber evidence="2">2.3.1.292</ecNumber>
    </recommendedName>
    <alternativeName>
        <fullName>(Phenol)carboxyphthiodiolenone synthase subunit A</fullName>
    </alternativeName>
    <alternativeName>
        <fullName>Beta-ketoacyl-acyl-carrier-protein synthase I</fullName>
    </alternativeName>
    <alternativeName>
        <fullName>Phthiocerol synthesis polyketide synthase type I PpsA</fullName>
    </alternativeName>
</protein>
<dbReference type="EC" id="2.3.1.292" evidence="2"/>
<dbReference type="EMBL" id="LT708304">
    <property type="protein sequence ID" value="SIU01577.1"/>
    <property type="molecule type" value="Genomic_DNA"/>
</dbReference>
<dbReference type="RefSeq" id="NP_856601.1">
    <property type="nucleotide sequence ID" value="NC_002945.3"/>
</dbReference>
<dbReference type="RefSeq" id="WP_010950800.1">
    <property type="nucleotide sequence ID" value="NC_002945.4"/>
</dbReference>
<dbReference type="SMR" id="Q7TXM0"/>
<dbReference type="KEGG" id="mbo:BQ2027_MB2956"/>
<dbReference type="PATRIC" id="fig|233413.5.peg.3244"/>
<dbReference type="BioCyc" id="MetaCyc:MONOMER-17242"/>
<dbReference type="UniPathway" id="UPA00094"/>
<dbReference type="Proteomes" id="UP000001419">
    <property type="component" value="Chromosome"/>
</dbReference>
<dbReference type="GO" id="GO:0034081">
    <property type="term" value="C:polyketide synthase complex"/>
    <property type="evidence" value="ECO:0000315"/>
    <property type="project" value="UniProtKB"/>
</dbReference>
<dbReference type="GO" id="GO:0004315">
    <property type="term" value="F:3-oxoacyl-[acyl-carrier-protein] synthase activity"/>
    <property type="evidence" value="ECO:0007669"/>
    <property type="project" value="InterPro"/>
</dbReference>
<dbReference type="GO" id="GO:0004312">
    <property type="term" value="F:fatty acid synthase activity"/>
    <property type="evidence" value="ECO:0007669"/>
    <property type="project" value="TreeGrafter"/>
</dbReference>
<dbReference type="GO" id="GO:0016491">
    <property type="term" value="F:oxidoreductase activity"/>
    <property type="evidence" value="ECO:0007669"/>
    <property type="project" value="UniProtKB-KW"/>
</dbReference>
<dbReference type="GO" id="GO:0031177">
    <property type="term" value="F:phosphopantetheine binding"/>
    <property type="evidence" value="ECO:0007669"/>
    <property type="project" value="InterPro"/>
</dbReference>
<dbReference type="GO" id="GO:0071766">
    <property type="term" value="P:Actinobacterium-type cell wall biogenesis"/>
    <property type="evidence" value="ECO:0000315"/>
    <property type="project" value="UniProtKB"/>
</dbReference>
<dbReference type="GO" id="GO:0006633">
    <property type="term" value="P:fatty acid biosynthetic process"/>
    <property type="evidence" value="ECO:0007669"/>
    <property type="project" value="UniProtKB-UniPathway"/>
</dbReference>
<dbReference type="GO" id="GO:0097041">
    <property type="term" value="P:phenolic phthiocerol biosynthetic process"/>
    <property type="evidence" value="ECO:0000315"/>
    <property type="project" value="UniProtKB"/>
</dbReference>
<dbReference type="GO" id="GO:0097040">
    <property type="term" value="P:phthiocerol biosynthetic process"/>
    <property type="evidence" value="ECO:0000315"/>
    <property type="project" value="UniProtKB"/>
</dbReference>
<dbReference type="CDD" id="cd05274">
    <property type="entry name" value="KR_FAS_SDR_x"/>
    <property type="match status" value="1"/>
</dbReference>
<dbReference type="CDD" id="cd00833">
    <property type="entry name" value="PKS"/>
    <property type="match status" value="1"/>
</dbReference>
<dbReference type="FunFam" id="1.10.1200.10:FF:000025">
    <property type="entry name" value="Phenolpthiocerol synthesis polyketide synthase PpsA"/>
    <property type="match status" value="1"/>
</dbReference>
<dbReference type="FunFam" id="1.10.1200.10:FF:000019">
    <property type="entry name" value="Phenolpthiocerol synthesis type-I polyketide synthase PPSA"/>
    <property type="match status" value="1"/>
</dbReference>
<dbReference type="FunFam" id="3.30.70.250:FF:000003">
    <property type="entry name" value="Polyketide beta-ketoacyl synthase Pks3"/>
    <property type="match status" value="1"/>
</dbReference>
<dbReference type="FunFam" id="3.40.47.10:FF:000019">
    <property type="entry name" value="Polyketide synthase type I"/>
    <property type="match status" value="1"/>
</dbReference>
<dbReference type="Gene3D" id="3.40.47.10">
    <property type="match status" value="1"/>
</dbReference>
<dbReference type="Gene3D" id="1.10.1200.10">
    <property type="entry name" value="ACP-like"/>
    <property type="match status" value="2"/>
</dbReference>
<dbReference type="Gene3D" id="3.30.70.250">
    <property type="entry name" value="Malonyl-CoA ACP transacylase, ACP-binding"/>
    <property type="match status" value="1"/>
</dbReference>
<dbReference type="Gene3D" id="3.40.366.10">
    <property type="entry name" value="Malonyl-Coenzyme A Acyl Carrier Protein, domain 2"/>
    <property type="match status" value="1"/>
</dbReference>
<dbReference type="Gene3D" id="3.40.50.720">
    <property type="entry name" value="NAD(P)-binding Rossmann-like Domain"/>
    <property type="match status" value="1"/>
</dbReference>
<dbReference type="Gene3D" id="3.10.129.110">
    <property type="entry name" value="Polyketide synthase dehydratase"/>
    <property type="match status" value="1"/>
</dbReference>
<dbReference type="InterPro" id="IPR001227">
    <property type="entry name" value="Ac_transferase_dom_sf"/>
</dbReference>
<dbReference type="InterPro" id="IPR036736">
    <property type="entry name" value="ACP-like_sf"/>
</dbReference>
<dbReference type="InterPro" id="IPR014043">
    <property type="entry name" value="Acyl_transferase_dom"/>
</dbReference>
<dbReference type="InterPro" id="IPR016035">
    <property type="entry name" value="Acyl_Trfase/lysoPLipase"/>
</dbReference>
<dbReference type="InterPro" id="IPR018201">
    <property type="entry name" value="Ketoacyl_synth_AS"/>
</dbReference>
<dbReference type="InterPro" id="IPR014031">
    <property type="entry name" value="Ketoacyl_synth_C"/>
</dbReference>
<dbReference type="InterPro" id="IPR014030">
    <property type="entry name" value="Ketoacyl_synth_N"/>
</dbReference>
<dbReference type="InterPro" id="IPR016036">
    <property type="entry name" value="Malonyl_transacylase_ACP-bd"/>
</dbReference>
<dbReference type="InterPro" id="IPR036291">
    <property type="entry name" value="NAD(P)-bd_dom_sf"/>
</dbReference>
<dbReference type="InterPro" id="IPR032821">
    <property type="entry name" value="PKS_assoc"/>
</dbReference>
<dbReference type="InterPro" id="IPR020841">
    <property type="entry name" value="PKS_Beta-ketoAc_synthase_dom"/>
</dbReference>
<dbReference type="InterPro" id="IPR042104">
    <property type="entry name" value="PKS_dehydratase_sf"/>
</dbReference>
<dbReference type="InterPro" id="IPR020807">
    <property type="entry name" value="PKS_DH"/>
</dbReference>
<dbReference type="InterPro" id="IPR049552">
    <property type="entry name" value="PKS_DH_N"/>
</dbReference>
<dbReference type="InterPro" id="IPR013968">
    <property type="entry name" value="PKS_KR"/>
</dbReference>
<dbReference type="InterPro" id="IPR049900">
    <property type="entry name" value="PKS_mFAS_DH"/>
</dbReference>
<dbReference type="InterPro" id="IPR050091">
    <property type="entry name" value="PKS_NRPS_Biosynth_Enz"/>
</dbReference>
<dbReference type="InterPro" id="IPR020806">
    <property type="entry name" value="PKS_PP-bd"/>
</dbReference>
<dbReference type="InterPro" id="IPR009081">
    <property type="entry name" value="PP-bd_ACP"/>
</dbReference>
<dbReference type="InterPro" id="IPR006162">
    <property type="entry name" value="Ppantetheine_attach_site"/>
</dbReference>
<dbReference type="InterPro" id="IPR016039">
    <property type="entry name" value="Thiolase-like"/>
</dbReference>
<dbReference type="PANTHER" id="PTHR43775">
    <property type="entry name" value="FATTY ACID SYNTHASE"/>
    <property type="match status" value="1"/>
</dbReference>
<dbReference type="PANTHER" id="PTHR43775:SF37">
    <property type="entry name" value="SI:DKEY-61P9.11"/>
    <property type="match status" value="1"/>
</dbReference>
<dbReference type="Pfam" id="PF00698">
    <property type="entry name" value="Acyl_transf_1"/>
    <property type="match status" value="1"/>
</dbReference>
<dbReference type="Pfam" id="PF16197">
    <property type="entry name" value="KAsynt_C_assoc"/>
    <property type="match status" value="1"/>
</dbReference>
<dbReference type="Pfam" id="PF00109">
    <property type="entry name" value="ketoacyl-synt"/>
    <property type="match status" value="1"/>
</dbReference>
<dbReference type="Pfam" id="PF02801">
    <property type="entry name" value="Ketoacyl-synt_C"/>
    <property type="match status" value="1"/>
</dbReference>
<dbReference type="Pfam" id="PF08659">
    <property type="entry name" value="KR"/>
    <property type="match status" value="1"/>
</dbReference>
<dbReference type="Pfam" id="PF21089">
    <property type="entry name" value="PKS_DH_N"/>
    <property type="match status" value="1"/>
</dbReference>
<dbReference type="Pfam" id="PF00550">
    <property type="entry name" value="PP-binding"/>
    <property type="match status" value="2"/>
</dbReference>
<dbReference type="SMART" id="SM00827">
    <property type="entry name" value="PKS_AT"/>
    <property type="match status" value="1"/>
</dbReference>
<dbReference type="SMART" id="SM00826">
    <property type="entry name" value="PKS_DH"/>
    <property type="match status" value="1"/>
</dbReference>
<dbReference type="SMART" id="SM00822">
    <property type="entry name" value="PKS_KR"/>
    <property type="match status" value="1"/>
</dbReference>
<dbReference type="SMART" id="SM00825">
    <property type="entry name" value="PKS_KS"/>
    <property type="match status" value="1"/>
</dbReference>
<dbReference type="SMART" id="SM00823">
    <property type="entry name" value="PKS_PP"/>
    <property type="match status" value="2"/>
</dbReference>
<dbReference type="SMART" id="SM01294">
    <property type="entry name" value="PKS_PP_betabranch"/>
    <property type="match status" value="1"/>
</dbReference>
<dbReference type="SUPFAM" id="SSF47336">
    <property type="entry name" value="ACP-like"/>
    <property type="match status" value="2"/>
</dbReference>
<dbReference type="SUPFAM" id="SSF52151">
    <property type="entry name" value="FabD/lysophospholipase-like"/>
    <property type="match status" value="1"/>
</dbReference>
<dbReference type="SUPFAM" id="SSF51735">
    <property type="entry name" value="NAD(P)-binding Rossmann-fold domains"/>
    <property type="match status" value="2"/>
</dbReference>
<dbReference type="SUPFAM" id="SSF55048">
    <property type="entry name" value="Probable ACP-binding domain of malonyl-CoA ACP transacylase"/>
    <property type="match status" value="1"/>
</dbReference>
<dbReference type="SUPFAM" id="SSF53901">
    <property type="entry name" value="Thiolase-like"/>
    <property type="match status" value="1"/>
</dbReference>
<dbReference type="PROSITE" id="PS50075">
    <property type="entry name" value="CARRIER"/>
    <property type="match status" value="2"/>
</dbReference>
<dbReference type="PROSITE" id="PS00606">
    <property type="entry name" value="KS3_1"/>
    <property type="match status" value="1"/>
</dbReference>
<dbReference type="PROSITE" id="PS52004">
    <property type="entry name" value="KS3_2"/>
    <property type="match status" value="1"/>
</dbReference>
<dbReference type="PROSITE" id="PS00012">
    <property type="entry name" value="PHOSPHOPANTETHEINE"/>
    <property type="match status" value="1"/>
</dbReference>
<dbReference type="PROSITE" id="PS52019">
    <property type="entry name" value="PKS_MFAS_DH"/>
    <property type="match status" value="1"/>
</dbReference>
<gene>
    <name type="primary">ppsA</name>
    <name type="ordered locus">BQ2027_MB2956</name>
</gene>
<keyword id="KW-0276">Fatty acid metabolism</keyword>
<keyword id="KW-0443">Lipid metabolism</keyword>
<keyword id="KW-0511">Multifunctional enzyme</keyword>
<keyword id="KW-0521">NADP</keyword>
<keyword id="KW-0560">Oxidoreductase</keyword>
<keyword id="KW-0596">Phosphopantetheine</keyword>
<keyword id="KW-0597">Phosphoprotein</keyword>
<keyword id="KW-1185">Reference proteome</keyword>
<keyword id="KW-0677">Repeat</keyword>
<keyword id="KW-0808">Transferase</keyword>